<sequence>MATDTAVTGAPETTELRLASGNGPVTRTVLRTPVRDALPSEVPLIDISPIFSTCVADRKAVARKIHDAATNIGFFYIQNHRVPSQDIDLAYSASQDFFRQEMEVKVEADAKDGPFDSGYRGPGTQRVNPTEGADLRETYSILYDPMLDPTVPDPANIPEPASRFLHLGRAPFESTATLPHFKDAFVRYFQACLVLARALTRAFALSLDLPESAFDGKVQYPDASLEINFYPPISTGHAVSAPGDADTRVSIGSHTDFLLFTILWQDSNGGLQVLNREGQWIRAIPVEGTFVVNIGDYLQRVTNDKYVSTVHRAQNFSGRERVSMPFFWGFGMHESCQVLRNCCGEDEKSKYDEVKCVDWVSRRLGNLFDLSDKG</sequence>
<keyword id="KW-0223">Dioxygenase</keyword>
<keyword id="KW-0408">Iron</keyword>
<keyword id="KW-0479">Metal-binding</keyword>
<keyword id="KW-0560">Oxidoreductase</keyword>
<keyword id="KW-1185">Reference proteome</keyword>
<accession>A0A166YZY9</accession>
<evidence type="ECO:0000250" key="1">
    <source>
        <dbReference type="UniProtKB" id="A0A455ZKR7"/>
    </source>
</evidence>
<evidence type="ECO:0000250" key="2">
    <source>
        <dbReference type="UniProtKB" id="Q4H424"/>
    </source>
</evidence>
<evidence type="ECO:0000255" key="3">
    <source>
        <dbReference type="PROSITE-ProRule" id="PRU00805"/>
    </source>
</evidence>
<evidence type="ECO:0000256" key="4">
    <source>
        <dbReference type="SAM" id="MobiDB-lite"/>
    </source>
</evidence>
<evidence type="ECO:0000269" key="5">
    <source>
    </source>
</evidence>
<evidence type="ECO:0000303" key="6">
    <source>
    </source>
</evidence>
<evidence type="ECO:0000305" key="7"/>
<evidence type="ECO:0000305" key="8">
    <source>
    </source>
</evidence>
<proteinExistence type="inferred from homology"/>
<reference key="1">
    <citation type="journal article" date="2016" name="Genome Biol. Evol.">
        <title>Divergent and convergent evolution of fungal pathogenicity.</title>
        <authorList>
            <person name="Shang Y."/>
            <person name="Xiao G."/>
            <person name="Zheng P."/>
            <person name="Cen K."/>
            <person name="Zhan S."/>
            <person name="Wang C."/>
        </authorList>
    </citation>
    <scope>NUCLEOTIDE SEQUENCE [LARGE SCALE GENOMIC DNA]</scope>
    <source>
        <strain>RCEF 4871</strain>
    </source>
</reference>
<reference key="2">
    <citation type="journal article" date="2019" name="Environ. Microbiol.">
        <title>Orthologous peramine and pyrrolopyrazine-producing biosynthetic gene clusters in Metarhizium rileyi, Metarhizium majus and Cladonia grayi.</title>
        <authorList>
            <person name="Berry D."/>
            <person name="Mace W."/>
            <person name="Rehner S.A."/>
            <person name="Grage K."/>
            <person name="Dijkwel P.P."/>
            <person name="Young C.A."/>
            <person name="Scott B."/>
        </authorList>
    </citation>
    <scope>FUNCTION</scope>
    <scope>PATHWAY</scope>
</reference>
<gene>
    <name evidence="6" type="primary">ppzC</name>
    <name type="ORF">NOR_07097</name>
</gene>
<feature type="chain" id="PRO_0000450257" description="2-oxoglutarate-Fe(II) type oxidoreductase ppzC">
    <location>
        <begin position="1"/>
        <end position="374"/>
    </location>
</feature>
<feature type="domain" description="Fe2OG dioxygenase" evidence="3">
    <location>
        <begin position="220"/>
        <end position="330"/>
    </location>
</feature>
<feature type="region of interest" description="Disordered" evidence="4">
    <location>
        <begin position="111"/>
        <end position="130"/>
    </location>
</feature>
<feature type="binding site" evidence="3">
    <location>
        <position position="254"/>
    </location>
    <ligand>
        <name>Fe cation</name>
        <dbReference type="ChEBI" id="CHEBI:24875"/>
    </ligand>
</feature>
<feature type="binding site" evidence="3">
    <location>
        <position position="256"/>
    </location>
    <ligand>
        <name>Fe cation</name>
        <dbReference type="ChEBI" id="CHEBI:24875"/>
    </ligand>
</feature>
<feature type="binding site" evidence="3">
    <location>
        <position position="311"/>
    </location>
    <ligand>
        <name>Fe cation</name>
        <dbReference type="ChEBI" id="CHEBI:24875"/>
    </ligand>
</feature>
<feature type="binding site" evidence="3">
    <location>
        <position position="321"/>
    </location>
    <ligand>
        <name>2-oxoglutarate</name>
        <dbReference type="ChEBI" id="CHEBI:16810"/>
    </ligand>
</feature>
<comment type="function">
    <text evidence="1 2 5">2-oxoglutarate-Fe(II) type oxidoreductase; part of the gene cluster that mediates the biosynthesis of pyrrolopyrazines, secondary metabolites showing insecticidal activity (PubMed:30452111). Within the pathway, ppzC uses peramine as substrate for hydroxylation to yield the novel analog 8-hydroxyperamine (By similarity). The single multifunctional NRPS ppzA is sufficient to produce peramine via condensation of 1-pyrroline-5-carboxylate and arginine, N-methylation of the alpha-amino group of arginine and reduction of the thioester and the cyclization to form an iminium ion resulting in release from the peptide synthetase. Deprotonation of this intermediate and oxidation of the pyrroline ring would give rise to peramine (By similarity). In Epichloe species that produce only peramine, the peramine synthetase gene is not localized in a gene cluster, in contrast to Metarhizium species that contain additional pyrrolopyrazine biosynthesis genes. The 2-oxoglutarate-Fe(II) type oxidoreductase ppzC hydroxylates peramine to yield the newly identified compound 8-hydroxyperamine whereas ppzD converts L-proline into trans-4-hydroxy-L-proline, a precursor of peramine biosynthesis (By similarity).</text>
</comment>
<comment type="catalytic activity">
    <reaction evidence="1">
        <text>peramine + 2-oxoglutarate + O2 = 8-hydroxyperamine + succinate + CO2</text>
        <dbReference type="Rhea" id="RHEA:82167"/>
        <dbReference type="ChEBI" id="CHEBI:15379"/>
        <dbReference type="ChEBI" id="CHEBI:16526"/>
        <dbReference type="ChEBI" id="CHEBI:16810"/>
        <dbReference type="ChEBI" id="CHEBI:30031"/>
        <dbReference type="ChEBI" id="CHEBI:232088"/>
        <dbReference type="ChEBI" id="CHEBI:232097"/>
    </reaction>
    <physiologicalReaction direction="left-to-right" evidence="1">
        <dbReference type="Rhea" id="RHEA:82168"/>
    </physiologicalReaction>
</comment>
<comment type="cofactor">
    <cofactor evidence="3">
        <name>Fe(2+)</name>
        <dbReference type="ChEBI" id="CHEBI:29033"/>
    </cofactor>
    <text evidence="3">Binds 1 Fe(2+) ion per subunit.</text>
</comment>
<comment type="pathway">
    <text evidence="8">Secondary metabolite biosynthesis.</text>
</comment>
<comment type="similarity">
    <text evidence="7">Belongs to the iron/ascorbate-dependent oxidoreductase family.</text>
</comment>
<dbReference type="EC" id="1.14.11.-" evidence="1"/>
<dbReference type="EMBL" id="AZHC01000030">
    <property type="protein sequence ID" value="OAA37398.1"/>
    <property type="molecule type" value="Genomic_DNA"/>
</dbReference>
<dbReference type="SMR" id="A0A166YZY9"/>
<dbReference type="STRING" id="1081105.A0A166YZY9"/>
<dbReference type="OMA" id="QRINPFE"/>
<dbReference type="OrthoDB" id="627829at2759"/>
<dbReference type="Proteomes" id="UP000243498">
    <property type="component" value="Unassembled WGS sequence"/>
</dbReference>
<dbReference type="GO" id="GO:0051213">
    <property type="term" value="F:dioxygenase activity"/>
    <property type="evidence" value="ECO:0007669"/>
    <property type="project" value="UniProtKB-KW"/>
</dbReference>
<dbReference type="GO" id="GO:0046872">
    <property type="term" value="F:metal ion binding"/>
    <property type="evidence" value="ECO:0007669"/>
    <property type="project" value="UniProtKB-KW"/>
</dbReference>
<dbReference type="GO" id="GO:0044283">
    <property type="term" value="P:small molecule biosynthetic process"/>
    <property type="evidence" value="ECO:0007669"/>
    <property type="project" value="UniProtKB-ARBA"/>
</dbReference>
<dbReference type="Gene3D" id="2.60.120.330">
    <property type="entry name" value="B-lactam Antibiotic, Isopenicillin N Synthase, Chain"/>
    <property type="match status" value="1"/>
</dbReference>
<dbReference type="InterPro" id="IPR026992">
    <property type="entry name" value="DIOX_N"/>
</dbReference>
<dbReference type="InterPro" id="IPR044861">
    <property type="entry name" value="IPNS-like_FE2OG_OXY"/>
</dbReference>
<dbReference type="InterPro" id="IPR027443">
    <property type="entry name" value="IPNS-like_sf"/>
</dbReference>
<dbReference type="InterPro" id="IPR050231">
    <property type="entry name" value="Iron_ascorbate_oxido_reductase"/>
</dbReference>
<dbReference type="InterPro" id="IPR005123">
    <property type="entry name" value="Oxoglu/Fe-dep_dioxygenase_dom"/>
</dbReference>
<dbReference type="PANTHER" id="PTHR47990">
    <property type="entry name" value="2-OXOGLUTARATE (2OG) AND FE(II)-DEPENDENT OXYGENASE SUPERFAMILY PROTEIN-RELATED"/>
    <property type="match status" value="1"/>
</dbReference>
<dbReference type="Pfam" id="PF03171">
    <property type="entry name" value="2OG-FeII_Oxy"/>
    <property type="match status" value="1"/>
</dbReference>
<dbReference type="Pfam" id="PF14226">
    <property type="entry name" value="DIOX_N"/>
    <property type="match status" value="1"/>
</dbReference>
<dbReference type="PRINTS" id="PR00682">
    <property type="entry name" value="IPNSYNTHASE"/>
</dbReference>
<dbReference type="SUPFAM" id="SSF51197">
    <property type="entry name" value="Clavaminate synthase-like"/>
    <property type="match status" value="1"/>
</dbReference>
<dbReference type="PROSITE" id="PS51471">
    <property type="entry name" value="FE2OG_OXY"/>
    <property type="match status" value="1"/>
</dbReference>
<protein>
    <recommendedName>
        <fullName evidence="6">2-oxoglutarate-Fe(II) type oxidoreductase ppzC</fullName>
        <ecNumber evidence="1">1.14.11.-</ecNumber>
    </recommendedName>
    <alternativeName>
        <fullName evidence="6">Pyrrolopyrazine biosynthesis cluster protein C</fullName>
    </alternativeName>
</protein>
<name>PPZC_METRR</name>
<organism>
    <name type="scientific">Metarhizium rileyi (strain RCEF 4871)</name>
    <name type="common">Nomuraea rileyi</name>
    <dbReference type="NCBI Taxonomy" id="1649241"/>
    <lineage>
        <taxon>Eukaryota</taxon>
        <taxon>Fungi</taxon>
        <taxon>Dikarya</taxon>
        <taxon>Ascomycota</taxon>
        <taxon>Pezizomycotina</taxon>
        <taxon>Sordariomycetes</taxon>
        <taxon>Hypocreomycetidae</taxon>
        <taxon>Hypocreales</taxon>
        <taxon>Clavicipitaceae</taxon>
        <taxon>Metarhizium</taxon>
    </lineage>
</organism>